<organism>
    <name type="scientific">Cryptomeria japonica</name>
    <name type="common">Japanese cedar</name>
    <name type="synonym">Cupressus japonica</name>
    <dbReference type="NCBI Taxonomy" id="3369"/>
    <lineage>
        <taxon>Eukaryota</taxon>
        <taxon>Viridiplantae</taxon>
        <taxon>Streptophyta</taxon>
        <taxon>Embryophyta</taxon>
        <taxon>Tracheophyta</taxon>
        <taxon>Spermatophyta</taxon>
        <taxon>Pinopsida</taxon>
        <taxon>Pinidae</taxon>
        <taxon>Conifers II</taxon>
        <taxon>Cupressales</taxon>
        <taxon>Cupressaceae</taxon>
        <taxon>Cryptomeria</taxon>
    </lineage>
</organism>
<reference key="1">
    <citation type="journal article" date="2008" name="BMC Plant Biol.">
        <title>Complete nucleotide sequence of the Cryptomeria japonica D. Don. chloroplast genome and comparative chloroplast genomics: diversified genomic structure of coniferous species.</title>
        <authorList>
            <person name="Hirao T."/>
            <person name="Watanabe A."/>
            <person name="Kurita M."/>
            <person name="Kondo T."/>
            <person name="Takata K."/>
        </authorList>
    </citation>
    <scope>NUCLEOTIDE SEQUENCE [LARGE SCALE GENOMIC DNA]</scope>
</reference>
<reference key="2">
    <citation type="journal article" date="2009" name="Curr. Genet.">
        <title>A frameshift mutation of the chloroplast matK coding region is associated with chlorophyll deficiency in the Cryptomeria japonica virescent mutant Wogon-Sugi.</title>
        <authorList>
            <person name="Hirao T."/>
            <person name="Watanabe A."/>
            <person name="Kurita M."/>
            <person name="Kondo T."/>
            <person name="Takata K."/>
        </authorList>
    </citation>
    <scope>NUCLEOTIDE SEQUENCE [LARGE SCALE GENOMIC DNA]</scope>
    <source>
        <strain>cv. Wogon-Sugi</strain>
        <strain>cv. Yaku-Sugi</strain>
    </source>
</reference>
<keyword id="KW-0067">ATP-binding</keyword>
<keyword id="KW-0150">Chloroplast</keyword>
<keyword id="KW-0275">Fatty acid biosynthesis</keyword>
<keyword id="KW-0276">Fatty acid metabolism</keyword>
<keyword id="KW-0444">Lipid biosynthesis</keyword>
<keyword id="KW-0443">Lipid metabolism</keyword>
<keyword id="KW-0479">Metal-binding</keyword>
<keyword id="KW-0547">Nucleotide-binding</keyword>
<keyword id="KW-0934">Plastid</keyword>
<keyword id="KW-0808">Transferase</keyword>
<keyword id="KW-0862">Zinc</keyword>
<keyword id="KW-0863">Zinc-finger</keyword>
<evidence type="ECO:0000250" key="1"/>
<evidence type="ECO:0000255" key="2">
    <source>
        <dbReference type="HAMAP-Rule" id="MF_01395"/>
    </source>
</evidence>
<evidence type="ECO:0000255" key="3">
    <source>
        <dbReference type="PROSITE-ProRule" id="PRU01136"/>
    </source>
</evidence>
<dbReference type="EC" id="2.1.3.15" evidence="2"/>
<dbReference type="EMBL" id="AP009377">
    <property type="protein sequence ID" value="BAG16661.1"/>
    <property type="molecule type" value="Genomic_DNA"/>
</dbReference>
<dbReference type="EMBL" id="AP010966">
    <property type="protein sequence ID" value="BAH73287.1"/>
    <property type="molecule type" value="Genomic_DNA"/>
</dbReference>
<dbReference type="EMBL" id="AP010967">
    <property type="protein sequence ID" value="BAH73368.1"/>
    <property type="molecule type" value="Genomic_DNA"/>
</dbReference>
<dbReference type="RefSeq" id="YP_001806663.1">
    <property type="nucleotide sequence ID" value="NC_010548.1"/>
</dbReference>
<dbReference type="SMR" id="B1VKF0"/>
<dbReference type="GeneID" id="6166625"/>
<dbReference type="KEGG" id="cjf:6166625"/>
<dbReference type="OrthoDB" id="10053020at2759"/>
<dbReference type="UniPathway" id="UPA00655">
    <property type="reaction ID" value="UER00711"/>
</dbReference>
<dbReference type="GO" id="GO:0009317">
    <property type="term" value="C:acetyl-CoA carboxylase complex"/>
    <property type="evidence" value="ECO:0007669"/>
    <property type="project" value="InterPro"/>
</dbReference>
<dbReference type="GO" id="GO:0009570">
    <property type="term" value="C:chloroplast stroma"/>
    <property type="evidence" value="ECO:0007669"/>
    <property type="project" value="UniProtKB-SubCell"/>
</dbReference>
<dbReference type="GO" id="GO:0003989">
    <property type="term" value="F:acetyl-CoA carboxylase activity"/>
    <property type="evidence" value="ECO:0007669"/>
    <property type="project" value="InterPro"/>
</dbReference>
<dbReference type="GO" id="GO:0005524">
    <property type="term" value="F:ATP binding"/>
    <property type="evidence" value="ECO:0007669"/>
    <property type="project" value="UniProtKB-KW"/>
</dbReference>
<dbReference type="GO" id="GO:0016743">
    <property type="term" value="F:carboxyl- or carbamoyltransferase activity"/>
    <property type="evidence" value="ECO:0007669"/>
    <property type="project" value="UniProtKB-UniRule"/>
</dbReference>
<dbReference type="GO" id="GO:0008270">
    <property type="term" value="F:zinc ion binding"/>
    <property type="evidence" value="ECO:0007669"/>
    <property type="project" value="UniProtKB-UniRule"/>
</dbReference>
<dbReference type="GO" id="GO:0006633">
    <property type="term" value="P:fatty acid biosynthetic process"/>
    <property type="evidence" value="ECO:0007669"/>
    <property type="project" value="UniProtKB-KW"/>
</dbReference>
<dbReference type="GO" id="GO:2001295">
    <property type="term" value="P:malonyl-CoA biosynthetic process"/>
    <property type="evidence" value="ECO:0007669"/>
    <property type="project" value="UniProtKB-UniRule"/>
</dbReference>
<dbReference type="Gene3D" id="3.90.226.10">
    <property type="entry name" value="2-enoyl-CoA Hydratase, Chain A, domain 1"/>
    <property type="match status" value="2"/>
</dbReference>
<dbReference type="HAMAP" id="MF_01395">
    <property type="entry name" value="AcetylCoA_CT_beta"/>
    <property type="match status" value="1"/>
</dbReference>
<dbReference type="InterPro" id="IPR034733">
    <property type="entry name" value="AcCoA_carboxyl_beta"/>
</dbReference>
<dbReference type="InterPro" id="IPR000438">
    <property type="entry name" value="Acetyl_CoA_COase_Trfase_b_su"/>
</dbReference>
<dbReference type="InterPro" id="IPR029045">
    <property type="entry name" value="ClpP/crotonase-like_dom_sf"/>
</dbReference>
<dbReference type="InterPro" id="IPR011762">
    <property type="entry name" value="COA_CT_N"/>
</dbReference>
<dbReference type="PANTHER" id="PTHR42995">
    <property type="entry name" value="ACETYL-COENZYME A CARBOXYLASE CARBOXYL TRANSFERASE SUBUNIT BETA, CHLOROPLASTIC"/>
    <property type="match status" value="1"/>
</dbReference>
<dbReference type="PANTHER" id="PTHR42995:SF5">
    <property type="entry name" value="ACETYL-COENZYME A CARBOXYLASE CARBOXYL TRANSFERASE SUBUNIT BETA, CHLOROPLASTIC"/>
    <property type="match status" value="1"/>
</dbReference>
<dbReference type="Pfam" id="PF01039">
    <property type="entry name" value="Carboxyl_trans"/>
    <property type="match status" value="1"/>
</dbReference>
<dbReference type="PRINTS" id="PR01070">
    <property type="entry name" value="ACCCTRFRASEB"/>
</dbReference>
<dbReference type="SUPFAM" id="SSF52096">
    <property type="entry name" value="ClpP/crotonase"/>
    <property type="match status" value="2"/>
</dbReference>
<dbReference type="PROSITE" id="PS50980">
    <property type="entry name" value="COA_CT_NTER"/>
    <property type="match status" value="1"/>
</dbReference>
<feature type="chain" id="PRO_0000389903" description="Acetyl-coenzyme A carboxylase carboxyl transferase subunit beta, chloroplastic">
    <location>
        <begin position="1"/>
        <end position="700"/>
    </location>
</feature>
<feature type="domain" description="CoA carboxyltransferase N-terminal" evidence="3">
    <location>
        <begin position="445"/>
        <end position="700"/>
    </location>
</feature>
<feature type="zinc finger region" description="C4-type" evidence="2">
    <location>
        <begin position="34"/>
        <end position="56"/>
    </location>
</feature>
<feature type="binding site" evidence="2">
    <location>
        <position position="34"/>
    </location>
    <ligand>
        <name>Zn(2+)</name>
        <dbReference type="ChEBI" id="CHEBI:29105"/>
    </ligand>
</feature>
<feature type="binding site" evidence="2">
    <location>
        <position position="37"/>
    </location>
    <ligand>
        <name>Zn(2+)</name>
        <dbReference type="ChEBI" id="CHEBI:29105"/>
    </ligand>
</feature>
<feature type="binding site" evidence="2">
    <location>
        <position position="53"/>
    </location>
    <ligand>
        <name>Zn(2+)</name>
        <dbReference type="ChEBI" id="CHEBI:29105"/>
    </ligand>
</feature>
<feature type="binding site" evidence="2">
    <location>
        <position position="56"/>
    </location>
    <ligand>
        <name>Zn(2+)</name>
        <dbReference type="ChEBI" id="CHEBI:29105"/>
    </ligand>
</feature>
<comment type="function">
    <text evidence="2">Component of the acetyl coenzyme A carboxylase (ACC) complex. Biotin carboxylase (BC) catalyzes the carboxylation of biotin on its carrier protein (BCCP) and then the CO(2) group is transferred by the transcarboxylase to acetyl-CoA to form malonyl-CoA.</text>
</comment>
<comment type="catalytic activity">
    <reaction evidence="2">
        <text>N(6)-carboxybiotinyl-L-lysyl-[protein] + acetyl-CoA = N(6)-biotinyl-L-lysyl-[protein] + malonyl-CoA</text>
        <dbReference type="Rhea" id="RHEA:54728"/>
        <dbReference type="Rhea" id="RHEA-COMP:10505"/>
        <dbReference type="Rhea" id="RHEA-COMP:10506"/>
        <dbReference type="ChEBI" id="CHEBI:57288"/>
        <dbReference type="ChEBI" id="CHEBI:57384"/>
        <dbReference type="ChEBI" id="CHEBI:83144"/>
        <dbReference type="ChEBI" id="CHEBI:83145"/>
        <dbReference type="EC" id="2.1.3.15"/>
    </reaction>
</comment>
<comment type="cofactor">
    <cofactor evidence="2">
        <name>Zn(2+)</name>
        <dbReference type="ChEBI" id="CHEBI:29105"/>
    </cofactor>
    <text evidence="2">Binds 1 zinc ion per subunit.</text>
</comment>
<comment type="pathway">
    <text evidence="2">Lipid metabolism; malonyl-CoA biosynthesis; malonyl-CoA from acetyl-CoA: step 1/1.</text>
</comment>
<comment type="subunit">
    <text evidence="1">Acetyl-CoA carboxylase is a heterohexamer composed of biotin carboxyl carrier protein, biotin carboxylase and 2 subunits each of ACCase subunit alpha and ACCase plastid-coded subunit beta (accD).</text>
</comment>
<comment type="subcellular location">
    <subcellularLocation>
        <location evidence="2">Plastid</location>
        <location evidence="2">Chloroplast stroma</location>
    </subcellularLocation>
</comment>
<comment type="similarity">
    <text evidence="2">Belongs to the AccD/PCCB family.</text>
</comment>
<sequence>MCEENENKDSEYIETTPVENGYNSERFKHLWFLCENCETLIYKKSLLEQKGVCAECGATLQMTSSERIELLIDNGTWRSINTKLSSIDVLEKKHTTFDIKMVRKVSILLYKVISGKYFYKEFFKNKYYNKALRILVAYNNTLVNILKVALGSKFIKYLNLDSKETIKILQDIIDTGLKTAQFALFEIRKKIKNEFYRFALLNKAFENKQISSLLAQNLEDRRDDESEIISIEFDRMAFRVQTFLILESLLKLNTQLADVKEQLLSQDKFLKAVATSLVKKELYFPEDKRKTRKIKKIFPFYPGTDPETDYFLWLRTHMAISLMERYLVLKEFKYWFRNRYCGLLEEEFPRFGSDILIEYVKKQDRYESYNMIDHIMQDDLHTSTNSVELFQQINLLFHHKNNEKDCDNNFLSYTENTKGIYFCLLEIMKQFSTLTLDSKDKFPKKKGRDTKDTEDIEDIDEEDIEEEYPLTYDSLTKEEKEYVDANIELIKSTFNLGKEEFIETEEQSYQDYNTSYQKETGLPDAIQTGVGEINGISVALGVMDFQFMGGSMGSVVGEKITRLIQFATENFLPLILVCASGGARMQEGSFSLMQMNKIAAMLHTYQKEKNLLYISVLTSPTTGGVTASFGMLANVTIVEPNAYIAFAGKRVIEQTLNQIVDDEDQISDSLFDFGMFDSMVPRALLKNVLSETIEIYMYGD</sequence>
<geneLocation type="chloroplast"/>
<protein>
    <recommendedName>
        <fullName evidence="2">Acetyl-coenzyme A carboxylase carboxyl transferase subunit beta, chloroplastic</fullName>
        <shortName evidence="2">ACCase subunit beta</shortName>
        <shortName evidence="2">Acetyl-CoA carboxylase carboxyltransferase subunit beta</shortName>
        <ecNumber evidence="2">2.1.3.15</ecNumber>
    </recommendedName>
</protein>
<name>ACCD_CRYJA</name>
<proteinExistence type="inferred from homology"/>
<gene>
    <name evidence="2" type="primary">accD</name>
</gene>
<accession>B1VKF0</accession>